<evidence type="ECO:0000255" key="1">
    <source>
        <dbReference type="HAMAP-Rule" id="MF_01445"/>
    </source>
</evidence>
<comment type="function">
    <text evidence="1">Required for the formation of a threonylcarbamoyl group on adenosine at position 37 (t(6)A37) in tRNAs that read codons beginning with adenine. Is involved in the transfer of the threonylcarbamoyl moiety of threonylcarbamoyl-AMP (TC-AMP) to the N6 group of A37, together with TsaE and TsaB. TsaD likely plays a direct catalytic role in this reaction.</text>
</comment>
<comment type="catalytic activity">
    <reaction evidence="1">
        <text>L-threonylcarbamoyladenylate + adenosine(37) in tRNA = N(6)-L-threonylcarbamoyladenosine(37) in tRNA + AMP + H(+)</text>
        <dbReference type="Rhea" id="RHEA:37059"/>
        <dbReference type="Rhea" id="RHEA-COMP:10162"/>
        <dbReference type="Rhea" id="RHEA-COMP:10163"/>
        <dbReference type="ChEBI" id="CHEBI:15378"/>
        <dbReference type="ChEBI" id="CHEBI:73682"/>
        <dbReference type="ChEBI" id="CHEBI:74411"/>
        <dbReference type="ChEBI" id="CHEBI:74418"/>
        <dbReference type="ChEBI" id="CHEBI:456215"/>
        <dbReference type="EC" id="2.3.1.234"/>
    </reaction>
</comment>
<comment type="cofactor">
    <cofactor evidence="1">
        <name>Fe(2+)</name>
        <dbReference type="ChEBI" id="CHEBI:29033"/>
    </cofactor>
    <text evidence="1">Binds 1 Fe(2+) ion per subunit.</text>
</comment>
<comment type="subcellular location">
    <subcellularLocation>
        <location evidence="1">Cytoplasm</location>
    </subcellularLocation>
</comment>
<comment type="similarity">
    <text evidence="1">Belongs to the KAE1 / TsaD family.</text>
</comment>
<protein>
    <recommendedName>
        <fullName evidence="1">tRNA N6-adenosine threonylcarbamoyltransferase</fullName>
        <ecNumber evidence="1">2.3.1.234</ecNumber>
    </recommendedName>
    <alternativeName>
        <fullName evidence="1">N6-L-threonylcarbamoyladenine synthase</fullName>
        <shortName evidence="1">t(6)A synthase</shortName>
    </alternativeName>
    <alternativeName>
        <fullName evidence="1">t(6)A37 threonylcarbamoyladenosine biosynthesis protein TsaD</fullName>
    </alternativeName>
    <alternativeName>
        <fullName evidence="1">tRNA threonylcarbamoyladenosine biosynthesis protein TsaD</fullName>
    </alternativeName>
</protein>
<name>TSAD_PROMA</name>
<gene>
    <name evidence="1" type="primary">tsaD</name>
    <name type="synonym">gcp</name>
    <name type="ordered locus">Pro_0468</name>
</gene>
<proteinExistence type="inferred from homology"/>
<feature type="chain" id="PRO_0000303477" description="tRNA N6-adenosine threonylcarbamoyltransferase">
    <location>
        <begin position="1"/>
        <end position="356"/>
    </location>
</feature>
<feature type="binding site" evidence="1">
    <location>
        <position position="115"/>
    </location>
    <ligand>
        <name>Fe cation</name>
        <dbReference type="ChEBI" id="CHEBI:24875"/>
    </ligand>
</feature>
<feature type="binding site" evidence="1">
    <location>
        <position position="119"/>
    </location>
    <ligand>
        <name>Fe cation</name>
        <dbReference type="ChEBI" id="CHEBI:24875"/>
    </ligand>
</feature>
<feature type="binding site" evidence="1">
    <location>
        <begin position="138"/>
        <end position="142"/>
    </location>
    <ligand>
        <name>substrate</name>
    </ligand>
</feature>
<feature type="binding site" evidence="1">
    <location>
        <position position="171"/>
    </location>
    <ligand>
        <name>substrate</name>
    </ligand>
</feature>
<feature type="binding site" evidence="1">
    <location>
        <position position="184"/>
    </location>
    <ligand>
        <name>substrate</name>
    </ligand>
</feature>
<feature type="binding site" evidence="1">
    <location>
        <position position="283"/>
    </location>
    <ligand>
        <name>substrate</name>
    </ligand>
</feature>
<feature type="binding site" evidence="1">
    <location>
        <position position="311"/>
    </location>
    <ligand>
        <name>Fe cation</name>
        <dbReference type="ChEBI" id="CHEBI:24875"/>
    </ligand>
</feature>
<sequence>MQTVLSLETSCDESAAALVKFNEGKFEILANSIASQANEHAKWGGVVPEIASRRHLESLPFLIQEVFSQSGINFSDVNAIAATVAPGLSGALLVGSVTARTLSCLHDLPFLGIHHLEGHLCSALLSENPPVPPYLVLLVSGGHTELIQVDRNFTYKRVGRSHDDAAGEAFDKVARLLGLSYPGGPAIEKFAKKGDPASFHFPKGRVSKPEGGFYPYDFSFSGLKTAVLRKVESIRSEGKQIPLANLAASFENVVSEVLVERSVKYAFDHGLHSLVMVGGVAANTCLRKMMVSKAEDKAIDVYMAPKAFCTDNAAMIGTAALVRLISGTSPSSLELGVSARFELDQSDLLYKSEPPF</sequence>
<keyword id="KW-0012">Acyltransferase</keyword>
<keyword id="KW-0963">Cytoplasm</keyword>
<keyword id="KW-0408">Iron</keyword>
<keyword id="KW-0479">Metal-binding</keyword>
<keyword id="KW-1185">Reference proteome</keyword>
<keyword id="KW-0808">Transferase</keyword>
<keyword id="KW-0819">tRNA processing</keyword>
<accession>Q7VDB5</accession>
<organism>
    <name type="scientific">Prochlorococcus marinus (strain SARG / CCMP1375 / SS120)</name>
    <dbReference type="NCBI Taxonomy" id="167539"/>
    <lineage>
        <taxon>Bacteria</taxon>
        <taxon>Bacillati</taxon>
        <taxon>Cyanobacteriota</taxon>
        <taxon>Cyanophyceae</taxon>
        <taxon>Synechococcales</taxon>
        <taxon>Prochlorococcaceae</taxon>
        <taxon>Prochlorococcus</taxon>
    </lineage>
</organism>
<dbReference type="EC" id="2.3.1.234" evidence="1"/>
<dbReference type="EMBL" id="AE017126">
    <property type="protein sequence ID" value="AAP99513.1"/>
    <property type="molecule type" value="Genomic_DNA"/>
</dbReference>
<dbReference type="RefSeq" id="NP_874861.1">
    <property type="nucleotide sequence ID" value="NC_005042.1"/>
</dbReference>
<dbReference type="RefSeq" id="WP_011124623.1">
    <property type="nucleotide sequence ID" value="NC_005042.1"/>
</dbReference>
<dbReference type="SMR" id="Q7VDB5"/>
<dbReference type="STRING" id="167539.Pro_0468"/>
<dbReference type="EnsemblBacteria" id="AAP99513">
    <property type="protein sequence ID" value="AAP99513"/>
    <property type="gene ID" value="Pro_0468"/>
</dbReference>
<dbReference type="KEGG" id="pma:Pro_0468"/>
<dbReference type="PATRIC" id="fig|167539.5.peg.481"/>
<dbReference type="eggNOG" id="COG0533">
    <property type="taxonomic scope" value="Bacteria"/>
</dbReference>
<dbReference type="HOGENOM" id="CLU_023208_0_2_3"/>
<dbReference type="OrthoDB" id="9806197at2"/>
<dbReference type="Proteomes" id="UP000001420">
    <property type="component" value="Chromosome"/>
</dbReference>
<dbReference type="GO" id="GO:0005737">
    <property type="term" value="C:cytoplasm"/>
    <property type="evidence" value="ECO:0007669"/>
    <property type="project" value="UniProtKB-SubCell"/>
</dbReference>
<dbReference type="GO" id="GO:0005506">
    <property type="term" value="F:iron ion binding"/>
    <property type="evidence" value="ECO:0007669"/>
    <property type="project" value="UniProtKB-UniRule"/>
</dbReference>
<dbReference type="GO" id="GO:0061711">
    <property type="term" value="F:N(6)-L-threonylcarbamoyladenine synthase activity"/>
    <property type="evidence" value="ECO:0007669"/>
    <property type="project" value="UniProtKB-EC"/>
</dbReference>
<dbReference type="GO" id="GO:0002949">
    <property type="term" value="P:tRNA threonylcarbamoyladenosine modification"/>
    <property type="evidence" value="ECO:0007669"/>
    <property type="project" value="UniProtKB-UniRule"/>
</dbReference>
<dbReference type="CDD" id="cd24133">
    <property type="entry name" value="ASKHA_NBD_TsaD_bac"/>
    <property type="match status" value="1"/>
</dbReference>
<dbReference type="FunFam" id="3.30.420.40:FF:000012">
    <property type="entry name" value="tRNA N6-adenosine threonylcarbamoyltransferase"/>
    <property type="match status" value="1"/>
</dbReference>
<dbReference type="FunFam" id="3.30.420.40:FF:000040">
    <property type="entry name" value="tRNA N6-adenosine threonylcarbamoyltransferase"/>
    <property type="match status" value="1"/>
</dbReference>
<dbReference type="Gene3D" id="3.30.420.40">
    <property type="match status" value="2"/>
</dbReference>
<dbReference type="HAMAP" id="MF_01445">
    <property type="entry name" value="TsaD"/>
    <property type="match status" value="1"/>
</dbReference>
<dbReference type="InterPro" id="IPR043129">
    <property type="entry name" value="ATPase_NBD"/>
</dbReference>
<dbReference type="InterPro" id="IPR000905">
    <property type="entry name" value="Gcp-like_dom"/>
</dbReference>
<dbReference type="InterPro" id="IPR017861">
    <property type="entry name" value="KAE1/TsaD"/>
</dbReference>
<dbReference type="InterPro" id="IPR017860">
    <property type="entry name" value="Peptidase_M22_CS"/>
</dbReference>
<dbReference type="InterPro" id="IPR022450">
    <property type="entry name" value="TsaD"/>
</dbReference>
<dbReference type="NCBIfam" id="TIGR00329">
    <property type="entry name" value="gcp_kae1"/>
    <property type="match status" value="1"/>
</dbReference>
<dbReference type="NCBIfam" id="TIGR03723">
    <property type="entry name" value="T6A_TsaD_YgjD"/>
    <property type="match status" value="1"/>
</dbReference>
<dbReference type="PANTHER" id="PTHR11735">
    <property type="entry name" value="TRNA N6-ADENOSINE THREONYLCARBAMOYLTRANSFERASE"/>
    <property type="match status" value="1"/>
</dbReference>
<dbReference type="PANTHER" id="PTHR11735:SF6">
    <property type="entry name" value="TRNA N6-ADENOSINE THREONYLCARBAMOYLTRANSFERASE, MITOCHONDRIAL"/>
    <property type="match status" value="1"/>
</dbReference>
<dbReference type="Pfam" id="PF00814">
    <property type="entry name" value="TsaD"/>
    <property type="match status" value="1"/>
</dbReference>
<dbReference type="PRINTS" id="PR00789">
    <property type="entry name" value="OSIALOPTASE"/>
</dbReference>
<dbReference type="SUPFAM" id="SSF53067">
    <property type="entry name" value="Actin-like ATPase domain"/>
    <property type="match status" value="2"/>
</dbReference>
<dbReference type="PROSITE" id="PS01016">
    <property type="entry name" value="GLYCOPROTEASE"/>
    <property type="match status" value="1"/>
</dbReference>
<reference key="1">
    <citation type="journal article" date="2003" name="Proc. Natl. Acad. Sci. U.S.A.">
        <title>Genome sequence of the cyanobacterium Prochlorococcus marinus SS120, a nearly minimal oxyphototrophic genome.</title>
        <authorList>
            <person name="Dufresne A."/>
            <person name="Salanoubat M."/>
            <person name="Partensky F."/>
            <person name="Artiguenave F."/>
            <person name="Axmann I.M."/>
            <person name="Barbe V."/>
            <person name="Duprat S."/>
            <person name="Galperin M.Y."/>
            <person name="Koonin E.V."/>
            <person name="Le Gall F."/>
            <person name="Makarova K.S."/>
            <person name="Ostrowski M."/>
            <person name="Oztas S."/>
            <person name="Robert C."/>
            <person name="Rogozin I.B."/>
            <person name="Scanlan D.J."/>
            <person name="Tandeau de Marsac N."/>
            <person name="Weissenbach J."/>
            <person name="Wincker P."/>
            <person name="Wolf Y.I."/>
            <person name="Hess W.R."/>
        </authorList>
    </citation>
    <scope>NUCLEOTIDE SEQUENCE [LARGE SCALE GENOMIC DNA]</scope>
    <source>
        <strain>SARG / CCMP1375 / SS120</strain>
    </source>
</reference>